<evidence type="ECO:0000255" key="1">
    <source>
        <dbReference type="HAMAP-Rule" id="MF_00453"/>
    </source>
</evidence>
<sequence length="511" mass="56682">MSNIYTDLSSAELVEQAISRKEGRMAANGSLVVNTGKRTGRSPMDRFIVQEPSTADAIDWGAINRPFDAEKFDALWDRVEDYISTRDRFVSHLHVGADPEHYLPIKVTTETAWHNLFGRNLFIRPERYNPADKQEWQVMNIPDFVCEPERDGTNSDGAVIINFARRKVLLAGMRYAGEMKKAMFSVQNFLLPEKDVLPMHCSANVGEDGQTCLFFGLSGTGKTTLSADESRFLIGDDEHGWGRGTVFNVEGGCYAKCIDLSQKNEPVIWNAIRFGAIVENVVIDDQDRTPDYTDVSLTENTRCAYPLEHVEKRVLENRAGEPSAIVFLTCDMTGVLPPVSILSKEAAAYHFLSGYTALVGSTEMGSSSKLKSTFSTCFGAPFFPRPAGVYAELLMKRMEEFGSKVYLVNTGWTGGPHGVGKRFSIPVTRAIISAIQSGELADVETEHLEKLNLTVPKELEGVDSVLLNPRNTWADKEAYDAKAQDLIQQFVENFKKFDVSDAIRAAGPSLD</sequence>
<organism>
    <name type="scientific">Hahella chejuensis (strain KCTC 2396)</name>
    <dbReference type="NCBI Taxonomy" id="349521"/>
    <lineage>
        <taxon>Bacteria</taxon>
        <taxon>Pseudomonadati</taxon>
        <taxon>Pseudomonadota</taxon>
        <taxon>Gammaproteobacteria</taxon>
        <taxon>Oceanospirillales</taxon>
        <taxon>Hahellaceae</taxon>
        <taxon>Hahella</taxon>
    </lineage>
</organism>
<keyword id="KW-0067">ATP-binding</keyword>
<keyword id="KW-0963">Cytoplasm</keyword>
<keyword id="KW-0210">Decarboxylase</keyword>
<keyword id="KW-0312">Gluconeogenesis</keyword>
<keyword id="KW-0456">Lyase</keyword>
<keyword id="KW-0464">Manganese</keyword>
<keyword id="KW-0479">Metal-binding</keyword>
<keyword id="KW-0547">Nucleotide-binding</keyword>
<keyword id="KW-1185">Reference proteome</keyword>
<reference key="1">
    <citation type="journal article" date="2005" name="Nucleic Acids Res.">
        <title>Genomic blueprint of Hahella chejuensis, a marine microbe producing an algicidal agent.</title>
        <authorList>
            <person name="Jeong H."/>
            <person name="Yim J.H."/>
            <person name="Lee C."/>
            <person name="Choi S.-H."/>
            <person name="Park Y.K."/>
            <person name="Yoon S.H."/>
            <person name="Hur C.-G."/>
            <person name="Kang H.-Y."/>
            <person name="Kim D."/>
            <person name="Lee H.H."/>
            <person name="Park K.H."/>
            <person name="Park S.-H."/>
            <person name="Park H.-S."/>
            <person name="Lee H.K."/>
            <person name="Oh T.K."/>
            <person name="Kim J.F."/>
        </authorList>
    </citation>
    <scope>NUCLEOTIDE SEQUENCE [LARGE SCALE GENOMIC DNA]</scope>
    <source>
        <strain>KCTC 2396</strain>
    </source>
</reference>
<dbReference type="EC" id="4.1.1.49" evidence="1"/>
<dbReference type="EMBL" id="CP000155">
    <property type="protein sequence ID" value="ABC27465.1"/>
    <property type="molecule type" value="Genomic_DNA"/>
</dbReference>
<dbReference type="RefSeq" id="WP_011394542.1">
    <property type="nucleotide sequence ID" value="NC_007645.1"/>
</dbReference>
<dbReference type="SMR" id="Q2SPF9"/>
<dbReference type="STRING" id="349521.HCH_00561"/>
<dbReference type="KEGG" id="hch:HCH_00561"/>
<dbReference type="eggNOG" id="COG1866">
    <property type="taxonomic scope" value="Bacteria"/>
</dbReference>
<dbReference type="HOGENOM" id="CLU_018247_0_1_6"/>
<dbReference type="OrthoDB" id="9806325at2"/>
<dbReference type="UniPathway" id="UPA00138"/>
<dbReference type="Proteomes" id="UP000000238">
    <property type="component" value="Chromosome"/>
</dbReference>
<dbReference type="GO" id="GO:0005829">
    <property type="term" value="C:cytosol"/>
    <property type="evidence" value="ECO:0007669"/>
    <property type="project" value="TreeGrafter"/>
</dbReference>
<dbReference type="GO" id="GO:0005524">
    <property type="term" value="F:ATP binding"/>
    <property type="evidence" value="ECO:0007669"/>
    <property type="project" value="UniProtKB-UniRule"/>
</dbReference>
<dbReference type="GO" id="GO:0046872">
    <property type="term" value="F:metal ion binding"/>
    <property type="evidence" value="ECO:0007669"/>
    <property type="project" value="UniProtKB-KW"/>
</dbReference>
<dbReference type="GO" id="GO:0004612">
    <property type="term" value="F:phosphoenolpyruvate carboxykinase (ATP) activity"/>
    <property type="evidence" value="ECO:0007669"/>
    <property type="project" value="UniProtKB-UniRule"/>
</dbReference>
<dbReference type="GO" id="GO:0006094">
    <property type="term" value="P:gluconeogenesis"/>
    <property type="evidence" value="ECO:0007669"/>
    <property type="project" value="UniProtKB-UniRule"/>
</dbReference>
<dbReference type="CDD" id="cd00484">
    <property type="entry name" value="PEPCK_ATP"/>
    <property type="match status" value="1"/>
</dbReference>
<dbReference type="FunFam" id="2.170.8.10:FF:000001">
    <property type="entry name" value="Phosphoenolpyruvate carboxykinase (ATP)"/>
    <property type="match status" value="1"/>
</dbReference>
<dbReference type="Gene3D" id="3.90.228.20">
    <property type="match status" value="1"/>
</dbReference>
<dbReference type="Gene3D" id="3.40.449.10">
    <property type="entry name" value="Phosphoenolpyruvate Carboxykinase, domain 1"/>
    <property type="match status" value="1"/>
</dbReference>
<dbReference type="Gene3D" id="2.170.8.10">
    <property type="entry name" value="Phosphoenolpyruvate Carboxykinase, domain 2"/>
    <property type="match status" value="1"/>
</dbReference>
<dbReference type="HAMAP" id="MF_00453">
    <property type="entry name" value="PEPCK_ATP"/>
    <property type="match status" value="1"/>
</dbReference>
<dbReference type="InterPro" id="IPR001272">
    <property type="entry name" value="PEP_carboxykinase_ATP"/>
</dbReference>
<dbReference type="InterPro" id="IPR013035">
    <property type="entry name" value="PEP_carboxykinase_C"/>
</dbReference>
<dbReference type="InterPro" id="IPR008210">
    <property type="entry name" value="PEP_carboxykinase_N"/>
</dbReference>
<dbReference type="NCBIfam" id="TIGR00224">
    <property type="entry name" value="pckA"/>
    <property type="match status" value="1"/>
</dbReference>
<dbReference type="NCBIfam" id="NF006820">
    <property type="entry name" value="PRK09344.1-2"/>
    <property type="match status" value="1"/>
</dbReference>
<dbReference type="NCBIfam" id="NF006821">
    <property type="entry name" value="PRK09344.1-3"/>
    <property type="match status" value="1"/>
</dbReference>
<dbReference type="NCBIfam" id="NF006823">
    <property type="entry name" value="PRK09344.1-5"/>
    <property type="match status" value="1"/>
</dbReference>
<dbReference type="PANTHER" id="PTHR30031:SF0">
    <property type="entry name" value="PHOSPHOENOLPYRUVATE CARBOXYKINASE (ATP)"/>
    <property type="match status" value="1"/>
</dbReference>
<dbReference type="PANTHER" id="PTHR30031">
    <property type="entry name" value="PHOSPHOENOLPYRUVATE CARBOXYKINASE ATP"/>
    <property type="match status" value="1"/>
</dbReference>
<dbReference type="Pfam" id="PF01293">
    <property type="entry name" value="PEPCK_ATP"/>
    <property type="match status" value="1"/>
</dbReference>
<dbReference type="PIRSF" id="PIRSF006294">
    <property type="entry name" value="PEP_crbxkin"/>
    <property type="match status" value="1"/>
</dbReference>
<dbReference type="SUPFAM" id="SSF68923">
    <property type="entry name" value="PEP carboxykinase N-terminal domain"/>
    <property type="match status" value="1"/>
</dbReference>
<dbReference type="SUPFAM" id="SSF53795">
    <property type="entry name" value="PEP carboxykinase-like"/>
    <property type="match status" value="1"/>
</dbReference>
<comment type="function">
    <text evidence="1">Involved in the gluconeogenesis. Catalyzes the conversion of oxaloacetate (OAA) to phosphoenolpyruvate (PEP) through direct phosphoryl transfer between the nucleoside triphosphate and OAA.</text>
</comment>
<comment type="catalytic activity">
    <reaction evidence="1">
        <text>oxaloacetate + ATP = phosphoenolpyruvate + ADP + CO2</text>
        <dbReference type="Rhea" id="RHEA:18617"/>
        <dbReference type="ChEBI" id="CHEBI:16452"/>
        <dbReference type="ChEBI" id="CHEBI:16526"/>
        <dbReference type="ChEBI" id="CHEBI:30616"/>
        <dbReference type="ChEBI" id="CHEBI:58702"/>
        <dbReference type="ChEBI" id="CHEBI:456216"/>
        <dbReference type="EC" id="4.1.1.49"/>
    </reaction>
</comment>
<comment type="cofactor">
    <cofactor evidence="1">
        <name>Mn(2+)</name>
        <dbReference type="ChEBI" id="CHEBI:29035"/>
    </cofactor>
    <text evidence="1">Binds 1 Mn(2+) ion per subunit.</text>
</comment>
<comment type="pathway">
    <text evidence="1">Carbohydrate biosynthesis; gluconeogenesis.</text>
</comment>
<comment type="subunit">
    <text evidence="1">Monomer.</text>
</comment>
<comment type="subcellular location">
    <subcellularLocation>
        <location evidence="1">Cytoplasm</location>
    </subcellularLocation>
</comment>
<comment type="similarity">
    <text evidence="1">Belongs to the phosphoenolpyruvate carboxykinase (ATP) family.</text>
</comment>
<protein>
    <recommendedName>
        <fullName evidence="1">Phosphoenolpyruvate carboxykinase (ATP)</fullName>
        <shortName evidence="1">PCK</shortName>
        <shortName evidence="1">PEP carboxykinase</shortName>
        <shortName evidence="1">PEPCK</shortName>
        <ecNumber evidence="1">4.1.1.49</ecNumber>
    </recommendedName>
</protein>
<accession>Q2SPF9</accession>
<gene>
    <name evidence="1" type="primary">pckA</name>
    <name type="ordered locus">HCH_00561</name>
</gene>
<feature type="chain" id="PRO_0000236926" description="Phosphoenolpyruvate carboxykinase (ATP)">
    <location>
        <begin position="1"/>
        <end position="511"/>
    </location>
</feature>
<feature type="binding site" evidence="1">
    <location>
        <position position="41"/>
    </location>
    <ligand>
        <name>substrate</name>
    </ligand>
</feature>
<feature type="binding site" evidence="1">
    <location>
        <position position="175"/>
    </location>
    <ligand>
        <name>substrate</name>
    </ligand>
</feature>
<feature type="binding site" evidence="1">
    <location>
        <position position="181"/>
    </location>
    <ligand>
        <name>ATP</name>
        <dbReference type="ChEBI" id="CHEBI:30616"/>
    </ligand>
</feature>
<feature type="binding site" evidence="1">
    <location>
        <position position="181"/>
    </location>
    <ligand>
        <name>Mn(2+)</name>
        <dbReference type="ChEBI" id="CHEBI:29035"/>
    </ligand>
</feature>
<feature type="binding site" evidence="1">
    <location>
        <position position="181"/>
    </location>
    <ligand>
        <name>substrate</name>
    </ligand>
</feature>
<feature type="binding site" evidence="1">
    <location>
        <position position="200"/>
    </location>
    <ligand>
        <name>ATP</name>
        <dbReference type="ChEBI" id="CHEBI:30616"/>
    </ligand>
</feature>
<feature type="binding site" evidence="1">
    <location>
        <position position="200"/>
    </location>
    <ligand>
        <name>Mn(2+)</name>
        <dbReference type="ChEBI" id="CHEBI:29035"/>
    </ligand>
</feature>
<feature type="binding site" evidence="1">
    <location>
        <begin position="216"/>
        <end position="224"/>
    </location>
    <ligand>
        <name>ATP</name>
        <dbReference type="ChEBI" id="CHEBI:30616"/>
    </ligand>
</feature>
<feature type="binding site" evidence="1">
    <location>
        <position position="237"/>
    </location>
    <ligand>
        <name>Mn(2+)</name>
        <dbReference type="ChEBI" id="CHEBI:29035"/>
    </ligand>
</feature>
<feature type="binding site" evidence="1">
    <location>
        <position position="265"/>
    </location>
    <ligand>
        <name>ATP</name>
        <dbReference type="ChEBI" id="CHEBI:30616"/>
    </ligand>
</feature>
<feature type="binding site" evidence="1">
    <location>
        <position position="302"/>
    </location>
    <ligand>
        <name>ATP</name>
        <dbReference type="ChEBI" id="CHEBI:30616"/>
    </ligand>
</feature>
<feature type="binding site" evidence="1">
    <location>
        <position position="302"/>
    </location>
    <ligand>
        <name>substrate</name>
    </ligand>
</feature>
<feature type="binding site" evidence="1">
    <location>
        <position position="428"/>
    </location>
    <ligand>
        <name>ATP</name>
        <dbReference type="ChEBI" id="CHEBI:30616"/>
    </ligand>
</feature>
<name>PCKA_HAHCH</name>
<proteinExistence type="inferred from homology"/>